<protein>
    <recommendedName>
        <fullName evidence="1">Pantothenate synthetase</fullName>
        <shortName evidence="1">PS</shortName>
        <ecNumber evidence="1">6.3.2.1</ecNumber>
    </recommendedName>
    <alternativeName>
        <fullName evidence="1">Pantoate--beta-alanine ligase</fullName>
    </alternativeName>
    <alternativeName>
        <fullName evidence="1">Pantoate-activating enzyme</fullName>
    </alternativeName>
</protein>
<name>PANC_YERP3</name>
<sequence>MLIIETLPLLRQQIRRWRQEGKRIALVPTMGNLHEGHMTLVDEAKTRADVVVVTIFVNPLQFERPDDLAHYPRTLQEDCEKLTRHGADLVFAPAAADIYPAGLEKQTYVDVPALSTILEGASRPGHFRGVSTIVSKLFNLIQPDVACFGEKDYQQLALIRKMVADMGYDINIVGVPTVRAKDGLALSSRNGYLTEEERQIAPQLSKIMWALAEKMALGERQIDALLEDAAAQLLRAGFTPDELFIRDAETLQPLTVDSQQAVILMAAWLGKARLIDNQLVDLRH</sequence>
<gene>
    <name evidence="1" type="primary">panC</name>
    <name type="ordered locus">YpsIP31758_3344</name>
</gene>
<accession>A7FM23</accession>
<organism>
    <name type="scientific">Yersinia pseudotuberculosis serotype O:1b (strain IP 31758)</name>
    <dbReference type="NCBI Taxonomy" id="349747"/>
    <lineage>
        <taxon>Bacteria</taxon>
        <taxon>Pseudomonadati</taxon>
        <taxon>Pseudomonadota</taxon>
        <taxon>Gammaproteobacteria</taxon>
        <taxon>Enterobacterales</taxon>
        <taxon>Yersiniaceae</taxon>
        <taxon>Yersinia</taxon>
    </lineage>
</organism>
<proteinExistence type="inferred from homology"/>
<evidence type="ECO:0000255" key="1">
    <source>
        <dbReference type="HAMAP-Rule" id="MF_00158"/>
    </source>
</evidence>
<dbReference type="EC" id="6.3.2.1" evidence="1"/>
<dbReference type="EMBL" id="CP000720">
    <property type="protein sequence ID" value="ABS47537.1"/>
    <property type="molecule type" value="Genomic_DNA"/>
</dbReference>
<dbReference type="RefSeq" id="WP_011191752.1">
    <property type="nucleotide sequence ID" value="NC_009708.1"/>
</dbReference>
<dbReference type="SMR" id="A7FM23"/>
<dbReference type="GeneID" id="49787266"/>
<dbReference type="KEGG" id="ypi:YpsIP31758_3344"/>
<dbReference type="HOGENOM" id="CLU_047148_0_0_6"/>
<dbReference type="UniPathway" id="UPA00028">
    <property type="reaction ID" value="UER00005"/>
</dbReference>
<dbReference type="Proteomes" id="UP000002412">
    <property type="component" value="Chromosome"/>
</dbReference>
<dbReference type="GO" id="GO:0005829">
    <property type="term" value="C:cytosol"/>
    <property type="evidence" value="ECO:0007669"/>
    <property type="project" value="TreeGrafter"/>
</dbReference>
<dbReference type="GO" id="GO:0005524">
    <property type="term" value="F:ATP binding"/>
    <property type="evidence" value="ECO:0007669"/>
    <property type="project" value="UniProtKB-KW"/>
</dbReference>
<dbReference type="GO" id="GO:0004592">
    <property type="term" value="F:pantoate-beta-alanine ligase activity"/>
    <property type="evidence" value="ECO:0007669"/>
    <property type="project" value="UniProtKB-UniRule"/>
</dbReference>
<dbReference type="GO" id="GO:0015940">
    <property type="term" value="P:pantothenate biosynthetic process"/>
    <property type="evidence" value="ECO:0007669"/>
    <property type="project" value="UniProtKB-UniRule"/>
</dbReference>
<dbReference type="CDD" id="cd00560">
    <property type="entry name" value="PanC"/>
    <property type="match status" value="1"/>
</dbReference>
<dbReference type="FunFam" id="3.30.1300.10:FF:000001">
    <property type="entry name" value="Pantothenate synthetase"/>
    <property type="match status" value="1"/>
</dbReference>
<dbReference type="FunFam" id="3.40.50.620:FF:000013">
    <property type="entry name" value="Pantothenate synthetase"/>
    <property type="match status" value="1"/>
</dbReference>
<dbReference type="Gene3D" id="3.40.50.620">
    <property type="entry name" value="HUPs"/>
    <property type="match status" value="1"/>
</dbReference>
<dbReference type="Gene3D" id="3.30.1300.10">
    <property type="entry name" value="Pantoate-beta-alanine ligase, C-terminal domain"/>
    <property type="match status" value="1"/>
</dbReference>
<dbReference type="HAMAP" id="MF_00158">
    <property type="entry name" value="PanC"/>
    <property type="match status" value="1"/>
</dbReference>
<dbReference type="InterPro" id="IPR003721">
    <property type="entry name" value="Pantoate_ligase"/>
</dbReference>
<dbReference type="InterPro" id="IPR042176">
    <property type="entry name" value="Pantoate_ligase_C"/>
</dbReference>
<dbReference type="InterPro" id="IPR014729">
    <property type="entry name" value="Rossmann-like_a/b/a_fold"/>
</dbReference>
<dbReference type="NCBIfam" id="TIGR00018">
    <property type="entry name" value="panC"/>
    <property type="match status" value="1"/>
</dbReference>
<dbReference type="PANTHER" id="PTHR21299">
    <property type="entry name" value="CYTIDYLATE KINASE/PANTOATE-BETA-ALANINE LIGASE"/>
    <property type="match status" value="1"/>
</dbReference>
<dbReference type="PANTHER" id="PTHR21299:SF1">
    <property type="entry name" value="PANTOATE--BETA-ALANINE LIGASE"/>
    <property type="match status" value="1"/>
</dbReference>
<dbReference type="Pfam" id="PF02569">
    <property type="entry name" value="Pantoate_ligase"/>
    <property type="match status" value="1"/>
</dbReference>
<dbReference type="SUPFAM" id="SSF52374">
    <property type="entry name" value="Nucleotidylyl transferase"/>
    <property type="match status" value="1"/>
</dbReference>
<comment type="function">
    <text evidence="1">Catalyzes the condensation of pantoate with beta-alanine in an ATP-dependent reaction via a pantoyl-adenylate intermediate.</text>
</comment>
<comment type="catalytic activity">
    <reaction evidence="1">
        <text>(R)-pantoate + beta-alanine + ATP = (R)-pantothenate + AMP + diphosphate + H(+)</text>
        <dbReference type="Rhea" id="RHEA:10912"/>
        <dbReference type="ChEBI" id="CHEBI:15378"/>
        <dbReference type="ChEBI" id="CHEBI:15980"/>
        <dbReference type="ChEBI" id="CHEBI:29032"/>
        <dbReference type="ChEBI" id="CHEBI:30616"/>
        <dbReference type="ChEBI" id="CHEBI:33019"/>
        <dbReference type="ChEBI" id="CHEBI:57966"/>
        <dbReference type="ChEBI" id="CHEBI:456215"/>
        <dbReference type="EC" id="6.3.2.1"/>
    </reaction>
</comment>
<comment type="pathway">
    <text evidence="1">Cofactor biosynthesis; (R)-pantothenate biosynthesis; (R)-pantothenate from (R)-pantoate and beta-alanine: step 1/1.</text>
</comment>
<comment type="subunit">
    <text evidence="1">Homodimer.</text>
</comment>
<comment type="subcellular location">
    <subcellularLocation>
        <location evidence="1">Cytoplasm</location>
    </subcellularLocation>
</comment>
<comment type="miscellaneous">
    <text evidence="1">The reaction proceeds by a bi uni uni bi ping pong mechanism.</text>
</comment>
<comment type="similarity">
    <text evidence="1">Belongs to the pantothenate synthetase family.</text>
</comment>
<reference key="1">
    <citation type="journal article" date="2007" name="PLoS Genet.">
        <title>The complete genome sequence of Yersinia pseudotuberculosis IP31758, the causative agent of Far East scarlet-like fever.</title>
        <authorList>
            <person name="Eppinger M."/>
            <person name="Rosovitz M.J."/>
            <person name="Fricke W.F."/>
            <person name="Rasko D.A."/>
            <person name="Kokorina G."/>
            <person name="Fayolle C."/>
            <person name="Lindler L.E."/>
            <person name="Carniel E."/>
            <person name="Ravel J."/>
        </authorList>
    </citation>
    <scope>NUCLEOTIDE SEQUENCE [LARGE SCALE GENOMIC DNA]</scope>
    <source>
        <strain>IP 31758</strain>
    </source>
</reference>
<keyword id="KW-0067">ATP-binding</keyword>
<keyword id="KW-0963">Cytoplasm</keyword>
<keyword id="KW-0436">Ligase</keyword>
<keyword id="KW-0547">Nucleotide-binding</keyword>
<keyword id="KW-0566">Pantothenate biosynthesis</keyword>
<feature type="chain" id="PRO_1000097132" description="Pantothenate synthetase">
    <location>
        <begin position="1"/>
        <end position="284"/>
    </location>
</feature>
<feature type="active site" description="Proton donor" evidence="1">
    <location>
        <position position="37"/>
    </location>
</feature>
<feature type="binding site" evidence="1">
    <location>
        <begin position="30"/>
        <end position="37"/>
    </location>
    <ligand>
        <name>ATP</name>
        <dbReference type="ChEBI" id="CHEBI:30616"/>
    </ligand>
</feature>
<feature type="binding site" evidence="1">
    <location>
        <position position="61"/>
    </location>
    <ligand>
        <name>(R)-pantoate</name>
        <dbReference type="ChEBI" id="CHEBI:15980"/>
    </ligand>
</feature>
<feature type="binding site" evidence="1">
    <location>
        <position position="61"/>
    </location>
    <ligand>
        <name>beta-alanine</name>
        <dbReference type="ChEBI" id="CHEBI:57966"/>
    </ligand>
</feature>
<feature type="binding site" evidence="1">
    <location>
        <begin position="149"/>
        <end position="152"/>
    </location>
    <ligand>
        <name>ATP</name>
        <dbReference type="ChEBI" id="CHEBI:30616"/>
    </ligand>
</feature>
<feature type="binding site" evidence="1">
    <location>
        <position position="155"/>
    </location>
    <ligand>
        <name>(R)-pantoate</name>
        <dbReference type="ChEBI" id="CHEBI:15980"/>
    </ligand>
</feature>
<feature type="binding site" evidence="1">
    <location>
        <position position="178"/>
    </location>
    <ligand>
        <name>ATP</name>
        <dbReference type="ChEBI" id="CHEBI:30616"/>
    </ligand>
</feature>
<feature type="binding site" evidence="1">
    <location>
        <begin position="186"/>
        <end position="189"/>
    </location>
    <ligand>
        <name>ATP</name>
        <dbReference type="ChEBI" id="CHEBI:30616"/>
    </ligand>
</feature>